<evidence type="ECO:0000255" key="1">
    <source>
        <dbReference type="HAMAP-Rule" id="MF_01579"/>
    </source>
</evidence>
<dbReference type="EC" id="2.1.1.178" evidence="1"/>
<dbReference type="EMBL" id="AE016795">
    <property type="protein sequence ID" value="AAO10997.1"/>
    <property type="molecule type" value="Genomic_DNA"/>
</dbReference>
<dbReference type="RefSeq" id="WP_011080492.1">
    <property type="nucleotide sequence ID" value="NC_004459.3"/>
</dbReference>
<dbReference type="SMR" id="Q8D9F3"/>
<dbReference type="KEGG" id="vvu:VV1_2649"/>
<dbReference type="HOGENOM" id="CLU_005316_6_2_6"/>
<dbReference type="Proteomes" id="UP000002275">
    <property type="component" value="Chromosome 1"/>
</dbReference>
<dbReference type="GO" id="GO:0005737">
    <property type="term" value="C:cytoplasm"/>
    <property type="evidence" value="ECO:0007669"/>
    <property type="project" value="UniProtKB-SubCell"/>
</dbReference>
<dbReference type="GO" id="GO:0003723">
    <property type="term" value="F:RNA binding"/>
    <property type="evidence" value="ECO:0007669"/>
    <property type="project" value="UniProtKB-KW"/>
</dbReference>
<dbReference type="GO" id="GO:0009383">
    <property type="term" value="F:rRNA (cytosine-C5-)-methyltransferase activity"/>
    <property type="evidence" value="ECO:0007669"/>
    <property type="project" value="TreeGrafter"/>
</dbReference>
<dbReference type="GO" id="GO:0070475">
    <property type="term" value="P:rRNA base methylation"/>
    <property type="evidence" value="ECO:0007669"/>
    <property type="project" value="TreeGrafter"/>
</dbReference>
<dbReference type="CDD" id="cd02440">
    <property type="entry name" value="AdoMet_MTases"/>
    <property type="match status" value="1"/>
</dbReference>
<dbReference type="Gene3D" id="3.10.450.720">
    <property type="match status" value="1"/>
</dbReference>
<dbReference type="Gene3D" id="3.40.50.150">
    <property type="entry name" value="Vaccinia Virus protein VP39"/>
    <property type="match status" value="1"/>
</dbReference>
<dbReference type="HAMAP" id="MF_01579">
    <property type="entry name" value="16SrRNA_methyltr_F"/>
    <property type="match status" value="1"/>
</dbReference>
<dbReference type="InterPro" id="IPR031341">
    <property type="entry name" value="Methyltr_RsmF_N"/>
</dbReference>
<dbReference type="InterPro" id="IPR049560">
    <property type="entry name" value="MeTrfase_RsmB-F_NOP2_cat"/>
</dbReference>
<dbReference type="InterPro" id="IPR001678">
    <property type="entry name" value="MeTrfase_RsmB-F_NOP2_dom"/>
</dbReference>
<dbReference type="InterPro" id="IPR027391">
    <property type="entry name" value="Nol1_Nop2_Fmu_2"/>
</dbReference>
<dbReference type="InterPro" id="IPR011023">
    <property type="entry name" value="Nop2p"/>
</dbReference>
<dbReference type="InterPro" id="IPR023267">
    <property type="entry name" value="RCMT"/>
</dbReference>
<dbReference type="InterPro" id="IPR023545">
    <property type="entry name" value="rRNA_ssu_MeTfrase_F"/>
</dbReference>
<dbReference type="InterPro" id="IPR018314">
    <property type="entry name" value="RsmB/NOL1/NOP2-like_CS"/>
</dbReference>
<dbReference type="InterPro" id="IPR029063">
    <property type="entry name" value="SAM-dependent_MTases_sf"/>
</dbReference>
<dbReference type="InterPro" id="IPR048457">
    <property type="entry name" value="YebU_pre-PUA_dom"/>
</dbReference>
<dbReference type="NCBIfam" id="TIGR00446">
    <property type="entry name" value="nop2p"/>
    <property type="match status" value="1"/>
</dbReference>
<dbReference type="NCBIfam" id="NF008898">
    <property type="entry name" value="PRK11933.1"/>
    <property type="match status" value="1"/>
</dbReference>
<dbReference type="PANTHER" id="PTHR22807:SF30">
    <property type="entry name" value="28S RRNA (CYTOSINE(4447)-C(5))-METHYLTRANSFERASE-RELATED"/>
    <property type="match status" value="1"/>
</dbReference>
<dbReference type="PANTHER" id="PTHR22807">
    <property type="entry name" value="NOP2 YEAST -RELATED NOL1/NOP2/FMU SUN DOMAIN-CONTAINING"/>
    <property type="match status" value="1"/>
</dbReference>
<dbReference type="Pfam" id="PF01189">
    <property type="entry name" value="Methyltr_RsmB-F"/>
    <property type="match status" value="1"/>
</dbReference>
<dbReference type="Pfam" id="PF17125">
    <property type="entry name" value="Methyltr_RsmF_N"/>
    <property type="match status" value="1"/>
</dbReference>
<dbReference type="Pfam" id="PF13636">
    <property type="entry name" value="Methyltranf_PUA"/>
    <property type="match status" value="1"/>
</dbReference>
<dbReference type="Pfam" id="PF21150">
    <property type="entry name" value="YebU_pre-PUA_dom"/>
    <property type="match status" value="1"/>
</dbReference>
<dbReference type="PRINTS" id="PR02008">
    <property type="entry name" value="RCMTFAMILY"/>
</dbReference>
<dbReference type="SUPFAM" id="SSF53335">
    <property type="entry name" value="S-adenosyl-L-methionine-dependent methyltransferases"/>
    <property type="match status" value="1"/>
</dbReference>
<dbReference type="PROSITE" id="PS01153">
    <property type="entry name" value="NOL1_NOP2_SUN"/>
    <property type="match status" value="1"/>
</dbReference>
<dbReference type="PROSITE" id="PS51686">
    <property type="entry name" value="SAM_MT_RSMB_NOP"/>
    <property type="match status" value="1"/>
</dbReference>
<feature type="chain" id="PRO_0000285025" description="Ribosomal RNA small subunit methyltransferase F">
    <location>
        <begin position="1"/>
        <end position="472"/>
    </location>
</feature>
<feature type="active site" description="Nucleophile" evidence="1">
    <location>
        <position position="245"/>
    </location>
</feature>
<feature type="binding site" evidence="1">
    <location>
        <begin position="123"/>
        <end position="129"/>
    </location>
    <ligand>
        <name>S-adenosyl-L-methionine</name>
        <dbReference type="ChEBI" id="CHEBI:59789"/>
    </ligand>
</feature>
<feature type="binding site" evidence="1">
    <location>
        <position position="147"/>
    </location>
    <ligand>
        <name>S-adenosyl-L-methionine</name>
        <dbReference type="ChEBI" id="CHEBI:59789"/>
    </ligand>
</feature>
<feature type="binding site" evidence="1">
    <location>
        <position position="174"/>
    </location>
    <ligand>
        <name>S-adenosyl-L-methionine</name>
        <dbReference type="ChEBI" id="CHEBI:59789"/>
    </ligand>
</feature>
<feature type="binding site" evidence="1">
    <location>
        <position position="192"/>
    </location>
    <ligand>
        <name>S-adenosyl-L-methionine</name>
        <dbReference type="ChEBI" id="CHEBI:59789"/>
    </ligand>
</feature>
<keyword id="KW-0963">Cytoplasm</keyword>
<keyword id="KW-0489">Methyltransferase</keyword>
<keyword id="KW-0694">RNA-binding</keyword>
<keyword id="KW-0698">rRNA processing</keyword>
<keyword id="KW-0949">S-adenosyl-L-methionine</keyword>
<keyword id="KW-0808">Transferase</keyword>
<protein>
    <recommendedName>
        <fullName evidence="1">Ribosomal RNA small subunit methyltransferase F</fullName>
        <ecNumber evidence="1">2.1.1.178</ecNumber>
    </recommendedName>
    <alternativeName>
        <fullName evidence="1">16S rRNA m5C1407 methyltransferase</fullName>
    </alternativeName>
    <alternativeName>
        <fullName evidence="1">rRNA (cytosine-C(5)-)-methyltransferase RsmF</fullName>
    </alternativeName>
</protein>
<proteinExistence type="inferred from homology"/>
<name>RSMF_VIBVU</name>
<organism>
    <name type="scientific">Vibrio vulnificus (strain CMCP6)</name>
    <dbReference type="NCBI Taxonomy" id="216895"/>
    <lineage>
        <taxon>Bacteria</taxon>
        <taxon>Pseudomonadati</taxon>
        <taxon>Pseudomonadota</taxon>
        <taxon>Gammaproteobacteria</taxon>
        <taxon>Vibrionales</taxon>
        <taxon>Vibrionaceae</taxon>
        <taxon>Vibrio</taxon>
    </lineage>
</organism>
<gene>
    <name evidence="1" type="primary">rsmF</name>
    <name type="ordered locus">VV1_2649</name>
</gene>
<sequence length="472" mass="52548">MHSNVYLPETFLEKIKTILPSALNMDDFIAYCQQPLRKSIRVNTLKISVDAFLTIAQEKGWTLHPVPWCETGFWIEADESKVPLGNTAEHMCGLFYIQEASSMMPVSALFLGENQFESVLDTAAAPGSKTTQIAALMNNQGILVANEYAASRVKVLHANIERCGVRNAALSNFDGRVFGGWLPESFDAVLLDAPCSGEGTVRKDEDAMKNWSQESVLEIAATQKDLIESAFQALKPGGVMVYSTCTLSEEENQQVCHHLKHTFGDAVAFESLSSLFDGAEKALTEDGFLHIFPQVYDSEGFFVARIRKLASVNSPDVNKKMGKFPFQKASKKESALIEKSLSDSLDISLPADSTIWLRDNDVWLFPNALEPMLGELRFSRMGIKLAEKHKNGYRWQHQIATTLASGDEKTVVDIDTDAAREWFMGRDIYPENSGKGEVFVRYQGAIIGLGKWVSNKIKNGLPRELVRDKNLF</sequence>
<reference key="1">
    <citation type="submission" date="2002-12" db="EMBL/GenBank/DDBJ databases">
        <title>Complete genome sequence of Vibrio vulnificus CMCP6.</title>
        <authorList>
            <person name="Rhee J.H."/>
            <person name="Kim S.Y."/>
            <person name="Chung S.S."/>
            <person name="Kim J.J."/>
            <person name="Moon Y.H."/>
            <person name="Jeong H."/>
            <person name="Choy H.E."/>
        </authorList>
    </citation>
    <scope>NUCLEOTIDE SEQUENCE [LARGE SCALE GENOMIC DNA]</scope>
    <source>
        <strain>CMCP6</strain>
    </source>
</reference>
<comment type="function">
    <text evidence="1">Specifically methylates the cytosine at position 1407 (m5C1407) of 16S rRNA.</text>
</comment>
<comment type="catalytic activity">
    <reaction evidence="1">
        <text>cytidine(1407) in 16S rRNA + S-adenosyl-L-methionine = 5-methylcytidine(1407) in 16S rRNA + S-adenosyl-L-homocysteine + H(+)</text>
        <dbReference type="Rhea" id="RHEA:42756"/>
        <dbReference type="Rhea" id="RHEA-COMP:10223"/>
        <dbReference type="Rhea" id="RHEA-COMP:10224"/>
        <dbReference type="ChEBI" id="CHEBI:15378"/>
        <dbReference type="ChEBI" id="CHEBI:57856"/>
        <dbReference type="ChEBI" id="CHEBI:59789"/>
        <dbReference type="ChEBI" id="CHEBI:74483"/>
        <dbReference type="ChEBI" id="CHEBI:82748"/>
        <dbReference type="EC" id="2.1.1.178"/>
    </reaction>
</comment>
<comment type="subcellular location">
    <subcellularLocation>
        <location evidence="1">Cytoplasm</location>
    </subcellularLocation>
</comment>
<comment type="similarity">
    <text evidence="1">Belongs to the class I-like SAM-binding methyltransferase superfamily. RsmB/NOP family.</text>
</comment>
<accession>Q8D9F3</accession>